<accession>Q8X715</accession>
<accession>Q7AAB1</accession>
<sequence>MLTVPGLCWLCRMPLALGHWGICSVCSRAARTDKTLCPQCGLPATHSHLPCGRCLQKPPPWQRLVTVADYAPPLSLLIHQLKFSRRSEIASALSRLLLLEVLHARRTTGLQLPDRIISVPLWQRRHWRRGFNQSDLLCQPLSRWLHCQWDSEAITRTRATATQHFLSARLRRRNLKNAFRLELPVQGRHMVIVDDVVTTGSTVAEIAQLLLRNGAATVQVWCLCRTL</sequence>
<protein>
    <recommendedName>
        <fullName>DNA utilization protein YhgH</fullName>
    </recommendedName>
    <alternativeName>
        <fullName>Protein GntX</fullName>
    </alternativeName>
</protein>
<gene>
    <name type="primary">gntX</name>
    <name type="ordered locus">Z4768</name>
    <name type="ordered locus">ECs4255</name>
</gene>
<comment type="function">
    <text evidence="1">Could be involved in gluconate metabolism.</text>
</comment>
<comment type="similarity">
    <text evidence="2">Belongs to the ComF/GntX family.</text>
</comment>
<comment type="sequence caution" evidence="2">
    <conflict type="erroneous initiation">
        <sequence resource="EMBL-CDS" id="AAG58514"/>
    </conflict>
    <text>Extended N-terminus.</text>
</comment>
<organism>
    <name type="scientific">Escherichia coli O157:H7</name>
    <dbReference type="NCBI Taxonomy" id="83334"/>
    <lineage>
        <taxon>Bacteria</taxon>
        <taxon>Pseudomonadati</taxon>
        <taxon>Pseudomonadota</taxon>
        <taxon>Gammaproteobacteria</taxon>
        <taxon>Enterobacterales</taxon>
        <taxon>Enterobacteriaceae</taxon>
        <taxon>Escherichia</taxon>
    </lineage>
</organism>
<name>GNTX_ECO57</name>
<proteinExistence type="inferred from homology"/>
<evidence type="ECO:0000250" key="1"/>
<evidence type="ECO:0000305" key="2"/>
<dbReference type="EMBL" id="AE005174">
    <property type="protein sequence ID" value="AAG58514.1"/>
    <property type="status" value="ALT_INIT"/>
    <property type="molecule type" value="Genomic_DNA"/>
</dbReference>
<dbReference type="EMBL" id="BA000007">
    <property type="protein sequence ID" value="BAB37677.2"/>
    <property type="molecule type" value="Genomic_DNA"/>
</dbReference>
<dbReference type="PIR" id="F86006">
    <property type="entry name" value="F86006"/>
</dbReference>
<dbReference type="PIR" id="G91160">
    <property type="entry name" value="G91160"/>
</dbReference>
<dbReference type="RefSeq" id="NP_312281.1">
    <property type="nucleotide sequence ID" value="NC_002695.1"/>
</dbReference>
<dbReference type="RefSeq" id="WP_001303702.1">
    <property type="nucleotide sequence ID" value="NZ_VOAI01000004.1"/>
</dbReference>
<dbReference type="STRING" id="155864.Z4768"/>
<dbReference type="GeneID" id="915889"/>
<dbReference type="KEGG" id="ece:Z4768"/>
<dbReference type="KEGG" id="ecs:ECs_4255"/>
<dbReference type="PATRIC" id="fig|386585.9.peg.4445"/>
<dbReference type="eggNOG" id="COG1040">
    <property type="taxonomic scope" value="Bacteria"/>
</dbReference>
<dbReference type="HOGENOM" id="CLU_054549_0_2_6"/>
<dbReference type="OMA" id="DAAYWNE"/>
<dbReference type="Proteomes" id="UP000000558">
    <property type="component" value="Chromosome"/>
</dbReference>
<dbReference type="Proteomes" id="UP000002519">
    <property type="component" value="Chromosome"/>
</dbReference>
<dbReference type="CDD" id="cd06223">
    <property type="entry name" value="PRTases_typeI"/>
    <property type="match status" value="1"/>
</dbReference>
<dbReference type="FunFam" id="3.40.50.2020:FF:000054">
    <property type="entry name" value="ComF family protein"/>
    <property type="match status" value="1"/>
</dbReference>
<dbReference type="Gene3D" id="3.40.50.2020">
    <property type="match status" value="1"/>
</dbReference>
<dbReference type="InterPro" id="IPR051910">
    <property type="entry name" value="ComF/GntX_DNA_util-trans"/>
</dbReference>
<dbReference type="InterPro" id="IPR005222">
    <property type="entry name" value="Competence_ComF"/>
</dbReference>
<dbReference type="InterPro" id="IPR000836">
    <property type="entry name" value="PRibTrfase_dom"/>
</dbReference>
<dbReference type="InterPro" id="IPR029057">
    <property type="entry name" value="PRTase-like"/>
</dbReference>
<dbReference type="NCBIfam" id="TIGR00201">
    <property type="entry name" value="comF"/>
    <property type="match status" value="1"/>
</dbReference>
<dbReference type="NCBIfam" id="NF008616">
    <property type="entry name" value="PRK11595.1"/>
    <property type="match status" value="1"/>
</dbReference>
<dbReference type="PANTHER" id="PTHR47505">
    <property type="entry name" value="DNA UTILIZATION PROTEIN YHGH"/>
    <property type="match status" value="1"/>
</dbReference>
<dbReference type="PANTHER" id="PTHR47505:SF1">
    <property type="entry name" value="DNA UTILIZATION PROTEIN YHGH"/>
    <property type="match status" value="1"/>
</dbReference>
<dbReference type="Pfam" id="PF00156">
    <property type="entry name" value="Pribosyltran"/>
    <property type="match status" value="1"/>
</dbReference>
<dbReference type="SUPFAM" id="SSF53271">
    <property type="entry name" value="PRTase-like"/>
    <property type="match status" value="1"/>
</dbReference>
<feature type="chain" id="PRO_0000209460" description="DNA utilization protein YhgH">
    <location>
        <begin position="1"/>
        <end position="227"/>
    </location>
</feature>
<keyword id="KW-1185">Reference proteome</keyword>
<reference key="1">
    <citation type="journal article" date="2001" name="Nature">
        <title>Genome sequence of enterohaemorrhagic Escherichia coli O157:H7.</title>
        <authorList>
            <person name="Perna N.T."/>
            <person name="Plunkett G. III"/>
            <person name="Burland V."/>
            <person name="Mau B."/>
            <person name="Glasner J.D."/>
            <person name="Rose D.J."/>
            <person name="Mayhew G.F."/>
            <person name="Evans P.S."/>
            <person name="Gregor J."/>
            <person name="Kirkpatrick H.A."/>
            <person name="Posfai G."/>
            <person name="Hackett J."/>
            <person name="Klink S."/>
            <person name="Boutin A."/>
            <person name="Shao Y."/>
            <person name="Miller L."/>
            <person name="Grotbeck E.J."/>
            <person name="Davis N.W."/>
            <person name="Lim A."/>
            <person name="Dimalanta E.T."/>
            <person name="Potamousis K."/>
            <person name="Apodaca J."/>
            <person name="Anantharaman T.S."/>
            <person name="Lin J."/>
            <person name="Yen G."/>
            <person name="Schwartz D.C."/>
            <person name="Welch R.A."/>
            <person name="Blattner F.R."/>
        </authorList>
    </citation>
    <scope>NUCLEOTIDE SEQUENCE [LARGE SCALE GENOMIC DNA]</scope>
    <source>
        <strain>O157:H7 / EDL933 / ATCC 700927 / EHEC</strain>
    </source>
</reference>
<reference key="2">
    <citation type="journal article" date="2001" name="DNA Res.">
        <title>Complete genome sequence of enterohemorrhagic Escherichia coli O157:H7 and genomic comparison with a laboratory strain K-12.</title>
        <authorList>
            <person name="Hayashi T."/>
            <person name="Makino K."/>
            <person name="Ohnishi M."/>
            <person name="Kurokawa K."/>
            <person name="Ishii K."/>
            <person name="Yokoyama K."/>
            <person name="Han C.-G."/>
            <person name="Ohtsubo E."/>
            <person name="Nakayama K."/>
            <person name="Murata T."/>
            <person name="Tanaka M."/>
            <person name="Tobe T."/>
            <person name="Iida T."/>
            <person name="Takami H."/>
            <person name="Honda T."/>
            <person name="Sasakawa C."/>
            <person name="Ogasawara N."/>
            <person name="Yasunaga T."/>
            <person name="Kuhara S."/>
            <person name="Shiba T."/>
            <person name="Hattori M."/>
            <person name="Shinagawa H."/>
        </authorList>
    </citation>
    <scope>NUCLEOTIDE SEQUENCE [LARGE SCALE GENOMIC DNA]</scope>
    <source>
        <strain>O157:H7 / Sakai / RIMD 0509952 / EHEC</strain>
    </source>
</reference>